<evidence type="ECO:0000255" key="1">
    <source>
        <dbReference type="HAMAP-Rule" id="MF_00220"/>
    </source>
</evidence>
<proteinExistence type="inferred from homology"/>
<gene>
    <name evidence="1" type="primary">pyrC</name>
    <name type="ordered locus">BC_3888</name>
</gene>
<name>PYRC_BACCR</name>
<comment type="function">
    <text evidence="1">Catalyzes the reversible cyclization of carbamoyl aspartate to dihydroorotate.</text>
</comment>
<comment type="catalytic activity">
    <reaction evidence="1">
        <text>(S)-dihydroorotate + H2O = N-carbamoyl-L-aspartate + H(+)</text>
        <dbReference type="Rhea" id="RHEA:24296"/>
        <dbReference type="ChEBI" id="CHEBI:15377"/>
        <dbReference type="ChEBI" id="CHEBI:15378"/>
        <dbReference type="ChEBI" id="CHEBI:30864"/>
        <dbReference type="ChEBI" id="CHEBI:32814"/>
        <dbReference type="EC" id="3.5.2.3"/>
    </reaction>
</comment>
<comment type="cofactor">
    <cofactor evidence="1">
        <name>Zn(2+)</name>
        <dbReference type="ChEBI" id="CHEBI:29105"/>
    </cofactor>
    <text evidence="1">Binds 2 Zn(2+) ions per subunit.</text>
</comment>
<comment type="pathway">
    <text evidence="1">Pyrimidine metabolism; UMP biosynthesis via de novo pathway; (S)-dihydroorotate from bicarbonate: step 3/3.</text>
</comment>
<comment type="similarity">
    <text evidence="1">Belongs to the metallo-dependent hydrolases superfamily. DHOase family. Class I DHOase subfamily.</text>
</comment>
<feature type="chain" id="PRO_0000325584" description="Dihydroorotase">
    <location>
        <begin position="1"/>
        <end position="428"/>
    </location>
</feature>
<feature type="active site" evidence="1">
    <location>
        <position position="304"/>
    </location>
</feature>
<feature type="binding site" evidence="1">
    <location>
        <position position="59"/>
    </location>
    <ligand>
        <name>Zn(2+)</name>
        <dbReference type="ChEBI" id="CHEBI:29105"/>
        <label>1</label>
    </ligand>
</feature>
<feature type="binding site" evidence="1">
    <location>
        <begin position="61"/>
        <end position="63"/>
    </location>
    <ligand>
        <name>substrate</name>
    </ligand>
</feature>
<feature type="binding site" evidence="1">
    <location>
        <position position="61"/>
    </location>
    <ligand>
        <name>Zn(2+)</name>
        <dbReference type="ChEBI" id="CHEBI:29105"/>
        <label>1</label>
    </ligand>
</feature>
<feature type="binding site" evidence="1">
    <location>
        <position position="93"/>
    </location>
    <ligand>
        <name>substrate</name>
    </ligand>
</feature>
<feature type="binding site" evidence="1">
    <location>
        <position position="151"/>
    </location>
    <ligand>
        <name>Zn(2+)</name>
        <dbReference type="ChEBI" id="CHEBI:29105"/>
        <label>1</label>
    </ligand>
</feature>
<feature type="binding site" evidence="1">
    <location>
        <position position="151"/>
    </location>
    <ligand>
        <name>Zn(2+)</name>
        <dbReference type="ChEBI" id="CHEBI:29105"/>
        <label>2</label>
    </ligand>
</feature>
<feature type="binding site" evidence="1">
    <location>
        <position position="178"/>
    </location>
    <ligand>
        <name>Zn(2+)</name>
        <dbReference type="ChEBI" id="CHEBI:29105"/>
        <label>2</label>
    </ligand>
</feature>
<feature type="binding site" evidence="1">
    <location>
        <position position="231"/>
    </location>
    <ligand>
        <name>Zn(2+)</name>
        <dbReference type="ChEBI" id="CHEBI:29105"/>
        <label>2</label>
    </ligand>
</feature>
<feature type="binding site" evidence="1">
    <location>
        <position position="277"/>
    </location>
    <ligand>
        <name>substrate</name>
    </ligand>
</feature>
<feature type="binding site" evidence="1">
    <location>
        <position position="304"/>
    </location>
    <ligand>
        <name>Zn(2+)</name>
        <dbReference type="ChEBI" id="CHEBI:29105"/>
        <label>1</label>
    </ligand>
</feature>
<feature type="binding site" evidence="1">
    <location>
        <position position="308"/>
    </location>
    <ligand>
        <name>substrate</name>
    </ligand>
</feature>
<feature type="binding site" evidence="1">
    <location>
        <begin position="322"/>
        <end position="323"/>
    </location>
    <ligand>
        <name>substrate</name>
    </ligand>
</feature>
<accession>Q819S1</accession>
<dbReference type="EC" id="3.5.2.3" evidence="1"/>
<dbReference type="EMBL" id="AE016877">
    <property type="protein sequence ID" value="AAP10809.1"/>
    <property type="molecule type" value="Genomic_DNA"/>
</dbReference>
<dbReference type="RefSeq" id="NP_833608.1">
    <property type="nucleotide sequence ID" value="NC_004722.1"/>
</dbReference>
<dbReference type="RefSeq" id="WP_001108367.1">
    <property type="nucleotide sequence ID" value="NZ_CP138336.1"/>
</dbReference>
<dbReference type="SMR" id="Q819S1"/>
<dbReference type="STRING" id="226900.BC_3888"/>
<dbReference type="KEGG" id="bce:BC3888"/>
<dbReference type="PATRIC" id="fig|226900.8.peg.4010"/>
<dbReference type="HOGENOM" id="CLU_015572_1_0_9"/>
<dbReference type="OrthoDB" id="9765462at2"/>
<dbReference type="UniPathway" id="UPA00070">
    <property type="reaction ID" value="UER00117"/>
</dbReference>
<dbReference type="Proteomes" id="UP000001417">
    <property type="component" value="Chromosome"/>
</dbReference>
<dbReference type="GO" id="GO:0005737">
    <property type="term" value="C:cytoplasm"/>
    <property type="evidence" value="ECO:0000318"/>
    <property type="project" value="GO_Central"/>
</dbReference>
<dbReference type="GO" id="GO:0004038">
    <property type="term" value="F:allantoinase activity"/>
    <property type="evidence" value="ECO:0000318"/>
    <property type="project" value="GO_Central"/>
</dbReference>
<dbReference type="GO" id="GO:0004151">
    <property type="term" value="F:dihydroorotase activity"/>
    <property type="evidence" value="ECO:0007669"/>
    <property type="project" value="UniProtKB-UniRule"/>
</dbReference>
<dbReference type="GO" id="GO:0008270">
    <property type="term" value="F:zinc ion binding"/>
    <property type="evidence" value="ECO:0007669"/>
    <property type="project" value="UniProtKB-UniRule"/>
</dbReference>
<dbReference type="GO" id="GO:0044205">
    <property type="term" value="P:'de novo' UMP biosynthetic process"/>
    <property type="evidence" value="ECO:0007669"/>
    <property type="project" value="UniProtKB-UniRule"/>
</dbReference>
<dbReference type="GO" id="GO:0006145">
    <property type="term" value="P:purine nucleobase catabolic process"/>
    <property type="evidence" value="ECO:0000318"/>
    <property type="project" value="GO_Central"/>
</dbReference>
<dbReference type="CDD" id="cd01317">
    <property type="entry name" value="DHOase_IIa"/>
    <property type="match status" value="1"/>
</dbReference>
<dbReference type="FunFam" id="2.30.40.10:FF:000007">
    <property type="entry name" value="Dihydroorotase"/>
    <property type="match status" value="1"/>
</dbReference>
<dbReference type="FunFam" id="3.20.20.140:FF:000025">
    <property type="entry name" value="Dihydroorotase"/>
    <property type="match status" value="1"/>
</dbReference>
<dbReference type="Gene3D" id="3.20.20.140">
    <property type="entry name" value="Metal-dependent hydrolases"/>
    <property type="match status" value="1"/>
</dbReference>
<dbReference type="Gene3D" id="2.30.40.10">
    <property type="entry name" value="Urease, subunit C, domain 1"/>
    <property type="match status" value="2"/>
</dbReference>
<dbReference type="HAMAP" id="MF_00220_B">
    <property type="entry name" value="PyrC_classI_B"/>
    <property type="match status" value="1"/>
</dbReference>
<dbReference type="InterPro" id="IPR006680">
    <property type="entry name" value="Amidohydro-rel"/>
</dbReference>
<dbReference type="InterPro" id="IPR004722">
    <property type="entry name" value="DHOase"/>
</dbReference>
<dbReference type="InterPro" id="IPR050138">
    <property type="entry name" value="DHOase/Allantoinase_Hydrolase"/>
</dbReference>
<dbReference type="InterPro" id="IPR002195">
    <property type="entry name" value="Dihydroorotase_CS"/>
</dbReference>
<dbReference type="InterPro" id="IPR011059">
    <property type="entry name" value="Metal-dep_hydrolase_composite"/>
</dbReference>
<dbReference type="InterPro" id="IPR032466">
    <property type="entry name" value="Metal_Hydrolase"/>
</dbReference>
<dbReference type="NCBIfam" id="NF006837">
    <property type="entry name" value="PRK09357.1-2"/>
    <property type="match status" value="1"/>
</dbReference>
<dbReference type="NCBIfam" id="TIGR00857">
    <property type="entry name" value="pyrC_multi"/>
    <property type="match status" value="1"/>
</dbReference>
<dbReference type="PANTHER" id="PTHR43668">
    <property type="entry name" value="ALLANTOINASE"/>
    <property type="match status" value="1"/>
</dbReference>
<dbReference type="PANTHER" id="PTHR43668:SF2">
    <property type="entry name" value="ALLANTOINASE"/>
    <property type="match status" value="1"/>
</dbReference>
<dbReference type="Pfam" id="PF01979">
    <property type="entry name" value="Amidohydro_1"/>
    <property type="match status" value="1"/>
</dbReference>
<dbReference type="SUPFAM" id="SSF51338">
    <property type="entry name" value="Composite domain of metallo-dependent hydrolases"/>
    <property type="match status" value="1"/>
</dbReference>
<dbReference type="SUPFAM" id="SSF51556">
    <property type="entry name" value="Metallo-dependent hydrolases"/>
    <property type="match status" value="1"/>
</dbReference>
<dbReference type="PROSITE" id="PS00482">
    <property type="entry name" value="DIHYDROOROTASE_1"/>
    <property type="match status" value="1"/>
</dbReference>
<dbReference type="PROSITE" id="PS00483">
    <property type="entry name" value="DIHYDROOROTASE_2"/>
    <property type="match status" value="1"/>
</dbReference>
<organism>
    <name type="scientific">Bacillus cereus (strain ATCC 14579 / DSM 31 / CCUG 7414 / JCM 2152 / NBRC 15305 / NCIMB 9373 / NCTC 2599 / NRRL B-3711)</name>
    <dbReference type="NCBI Taxonomy" id="226900"/>
    <lineage>
        <taxon>Bacteria</taxon>
        <taxon>Bacillati</taxon>
        <taxon>Bacillota</taxon>
        <taxon>Bacilli</taxon>
        <taxon>Bacillales</taxon>
        <taxon>Bacillaceae</taxon>
        <taxon>Bacillus</taxon>
        <taxon>Bacillus cereus group</taxon>
    </lineage>
</organism>
<reference key="1">
    <citation type="journal article" date="2003" name="Nature">
        <title>Genome sequence of Bacillus cereus and comparative analysis with Bacillus anthracis.</title>
        <authorList>
            <person name="Ivanova N."/>
            <person name="Sorokin A."/>
            <person name="Anderson I."/>
            <person name="Galleron N."/>
            <person name="Candelon B."/>
            <person name="Kapatral V."/>
            <person name="Bhattacharyya A."/>
            <person name="Reznik G."/>
            <person name="Mikhailova N."/>
            <person name="Lapidus A."/>
            <person name="Chu L."/>
            <person name="Mazur M."/>
            <person name="Goltsman E."/>
            <person name="Larsen N."/>
            <person name="D'Souza M."/>
            <person name="Walunas T."/>
            <person name="Grechkin Y."/>
            <person name="Pusch G."/>
            <person name="Haselkorn R."/>
            <person name="Fonstein M."/>
            <person name="Ehrlich S.D."/>
            <person name="Overbeek R."/>
            <person name="Kyrpides N.C."/>
        </authorList>
    </citation>
    <scope>NUCLEOTIDE SEQUENCE [LARGE SCALE GENOMIC DNA]</scope>
    <source>
        <strain>ATCC 14579 / DSM 31 / CCUG 7414 / JCM 2152 / NBRC 15305 / NCIMB 9373 / NCTC 2599 / NRRL B-3711</strain>
    </source>
</reference>
<protein>
    <recommendedName>
        <fullName evidence="1">Dihydroorotase</fullName>
        <shortName evidence="1">DHOase</shortName>
        <ecNumber evidence="1">3.5.2.3</ecNumber>
    </recommendedName>
</protein>
<sequence length="428" mass="46570">MNYLFKNGRYMNEEGKIVATDLLVQDGKIAKVAENITADNAEVIDVNGKLIAPGLVDVHVHLREPGGEHKETIETGTLAAAKGGFTTICAMPNTRPVPDCREHMEDLQKRIEEKAHVNVLPYGAITVRQAGSEMTDFETLKELGAFAFTDDGVGVQDASMMLAAMKRAAKLDMAVVAHCEENTLINKGCVHEGKFSEKHGLNGIPSVCESVHIARDILLAEAADCHYHVCHVSTKGSVRVIRDAKRAGIKVTAEVTPHHLVLCEDDIPSADPNFKMNPPLRGKEDHAALIEGLLDGTIDMIATDHAPHTAEEKAQGIERAPFGITGFETAFPLLYTNLVKKGVITLEQLIQFLTEKPADTFGLEAGRLKEGRAADITIIDLEQEEEIDPTTFLSKGKNTPFAGWKCQGWPVMTIVGGKIAWQKESALV</sequence>
<keyword id="KW-0378">Hydrolase</keyword>
<keyword id="KW-0479">Metal-binding</keyword>
<keyword id="KW-0665">Pyrimidine biosynthesis</keyword>
<keyword id="KW-1185">Reference proteome</keyword>
<keyword id="KW-0862">Zinc</keyword>